<gene>
    <name evidence="5" type="primary">kdgR</name>
    <name type="synonym">yebP</name>
    <name type="ordered locus">b1827</name>
    <name type="ordered locus">JW1816</name>
</gene>
<organism>
    <name type="scientific">Escherichia coli (strain K12)</name>
    <dbReference type="NCBI Taxonomy" id="83333"/>
    <lineage>
        <taxon>Bacteria</taxon>
        <taxon>Pseudomonadati</taxon>
        <taxon>Pseudomonadota</taxon>
        <taxon>Gammaproteobacteria</taxon>
        <taxon>Enterobacterales</taxon>
        <taxon>Enterobacteriaceae</taxon>
        <taxon>Escherichia</taxon>
    </lineage>
</organism>
<keyword id="KW-0002">3D-structure</keyword>
<keyword id="KW-0963">Cytoplasm</keyword>
<keyword id="KW-0238">DNA-binding</keyword>
<keyword id="KW-1185">Reference proteome</keyword>
<keyword id="KW-0678">Repressor</keyword>
<keyword id="KW-0804">Transcription</keyword>
<keyword id="KW-0805">Transcription regulation</keyword>
<accession>P76268</accession>
<accession>O07975</accession>
<dbReference type="EMBL" id="U00096">
    <property type="protein sequence ID" value="AAC74897.1"/>
    <property type="molecule type" value="Genomic_DNA"/>
</dbReference>
<dbReference type="EMBL" id="AP009048">
    <property type="protein sequence ID" value="BAA15635.1"/>
    <property type="molecule type" value="Genomic_DNA"/>
</dbReference>
<dbReference type="PIR" id="C64944">
    <property type="entry name" value="C64944"/>
</dbReference>
<dbReference type="RefSeq" id="NP_416341.1">
    <property type="nucleotide sequence ID" value="NC_000913.3"/>
</dbReference>
<dbReference type="RefSeq" id="WP_001262203.1">
    <property type="nucleotide sequence ID" value="NZ_LN832404.1"/>
</dbReference>
<dbReference type="PDB" id="1YSP">
    <property type="method" value="X-ray"/>
    <property type="resolution" value="1.80 A"/>
    <property type="chains" value="A=88-263"/>
</dbReference>
<dbReference type="PDBsum" id="1YSP"/>
<dbReference type="SMR" id="P76268"/>
<dbReference type="BioGRID" id="4261734">
    <property type="interactions" value="149"/>
</dbReference>
<dbReference type="BioGRID" id="850489">
    <property type="interactions" value="1"/>
</dbReference>
<dbReference type="DIP" id="DIP-10057N"/>
<dbReference type="FunCoup" id="P76268">
    <property type="interactions" value="188"/>
</dbReference>
<dbReference type="IntAct" id="P76268">
    <property type="interactions" value="4"/>
</dbReference>
<dbReference type="STRING" id="511145.b1827"/>
<dbReference type="jPOST" id="P76268"/>
<dbReference type="PaxDb" id="511145-b1827"/>
<dbReference type="EnsemblBacteria" id="AAC74897">
    <property type="protein sequence ID" value="AAC74897"/>
    <property type="gene ID" value="b1827"/>
</dbReference>
<dbReference type="GeneID" id="946129"/>
<dbReference type="KEGG" id="ecj:JW1816"/>
<dbReference type="KEGG" id="eco:b1827"/>
<dbReference type="KEGG" id="ecoc:C3026_10415"/>
<dbReference type="PATRIC" id="fig|1411691.4.peg.423"/>
<dbReference type="EchoBASE" id="EB3772"/>
<dbReference type="eggNOG" id="COG1414">
    <property type="taxonomic scope" value="Bacteria"/>
</dbReference>
<dbReference type="HOGENOM" id="CLU_062618_6_0_6"/>
<dbReference type="InParanoid" id="P76268"/>
<dbReference type="OMA" id="RHSMRMF"/>
<dbReference type="OrthoDB" id="9807558at2"/>
<dbReference type="PhylomeDB" id="P76268"/>
<dbReference type="BioCyc" id="EcoCyc:G7003-MONOMER"/>
<dbReference type="EvolutionaryTrace" id="P76268"/>
<dbReference type="PRO" id="PR:P76268"/>
<dbReference type="Proteomes" id="UP000000625">
    <property type="component" value="Chromosome"/>
</dbReference>
<dbReference type="GO" id="GO:0005829">
    <property type="term" value="C:cytosol"/>
    <property type="evidence" value="ECO:0000314"/>
    <property type="project" value="EcoCyc"/>
</dbReference>
<dbReference type="GO" id="GO:0003677">
    <property type="term" value="F:DNA binding"/>
    <property type="evidence" value="ECO:0000318"/>
    <property type="project" value="GO_Central"/>
</dbReference>
<dbReference type="GO" id="GO:0003700">
    <property type="term" value="F:DNA-binding transcription factor activity"/>
    <property type="evidence" value="ECO:0000314"/>
    <property type="project" value="EcoCyc"/>
</dbReference>
<dbReference type="GO" id="GO:0045892">
    <property type="term" value="P:negative regulation of DNA-templated transcription"/>
    <property type="evidence" value="ECO:0000314"/>
    <property type="project" value="EcoCyc"/>
</dbReference>
<dbReference type="CDD" id="cd00090">
    <property type="entry name" value="HTH_ARSR"/>
    <property type="match status" value="1"/>
</dbReference>
<dbReference type="FunFam" id="1.10.10.10:FF:000109">
    <property type="entry name" value="DNA-binding transcriptional regulator KdgR"/>
    <property type="match status" value="1"/>
</dbReference>
<dbReference type="FunFam" id="3.30.450.40:FF:000009">
    <property type="entry name" value="DNA-binding transcriptional regulator KdgR"/>
    <property type="match status" value="1"/>
</dbReference>
<dbReference type="Gene3D" id="3.30.450.40">
    <property type="match status" value="1"/>
</dbReference>
<dbReference type="Gene3D" id="1.10.10.10">
    <property type="entry name" value="Winged helix-like DNA-binding domain superfamily/Winged helix DNA-binding domain"/>
    <property type="match status" value="1"/>
</dbReference>
<dbReference type="InterPro" id="IPR011991">
    <property type="entry name" value="ArsR-like_HTH"/>
</dbReference>
<dbReference type="InterPro" id="IPR029016">
    <property type="entry name" value="GAF-like_dom_sf"/>
</dbReference>
<dbReference type="InterPro" id="IPR050707">
    <property type="entry name" value="HTH_MetabolicPath_Reg"/>
</dbReference>
<dbReference type="InterPro" id="IPR014757">
    <property type="entry name" value="Tscrpt_reg_IclR_C"/>
</dbReference>
<dbReference type="InterPro" id="IPR005471">
    <property type="entry name" value="Tscrpt_reg_IclR_N"/>
</dbReference>
<dbReference type="InterPro" id="IPR036388">
    <property type="entry name" value="WH-like_DNA-bd_sf"/>
</dbReference>
<dbReference type="InterPro" id="IPR036390">
    <property type="entry name" value="WH_DNA-bd_sf"/>
</dbReference>
<dbReference type="NCBIfam" id="NF011671">
    <property type="entry name" value="PRK15090.1"/>
    <property type="match status" value="1"/>
</dbReference>
<dbReference type="PANTHER" id="PTHR30136">
    <property type="entry name" value="HELIX-TURN-HELIX TRANSCRIPTIONAL REGULATOR, ICLR FAMILY"/>
    <property type="match status" value="1"/>
</dbReference>
<dbReference type="PANTHER" id="PTHR30136:SF7">
    <property type="entry name" value="HTH-TYPE TRANSCRIPTIONAL REGULATOR KDGR-RELATED"/>
    <property type="match status" value="1"/>
</dbReference>
<dbReference type="Pfam" id="PF09339">
    <property type="entry name" value="HTH_IclR"/>
    <property type="match status" value="1"/>
</dbReference>
<dbReference type="Pfam" id="PF01614">
    <property type="entry name" value="IclR_C"/>
    <property type="match status" value="1"/>
</dbReference>
<dbReference type="SMART" id="SM00346">
    <property type="entry name" value="HTH_ICLR"/>
    <property type="match status" value="1"/>
</dbReference>
<dbReference type="SUPFAM" id="SSF55781">
    <property type="entry name" value="GAF domain-like"/>
    <property type="match status" value="1"/>
</dbReference>
<dbReference type="SUPFAM" id="SSF46785">
    <property type="entry name" value="Winged helix' DNA-binding domain"/>
    <property type="match status" value="1"/>
</dbReference>
<dbReference type="PROSITE" id="PS51077">
    <property type="entry name" value="HTH_ICLR"/>
    <property type="match status" value="1"/>
</dbReference>
<dbReference type="PROSITE" id="PS51078">
    <property type="entry name" value="ICLR_ED"/>
    <property type="match status" value="1"/>
</dbReference>
<evidence type="ECO:0000255" key="1">
    <source>
        <dbReference type="PROSITE-ProRule" id="PRU00393"/>
    </source>
</evidence>
<evidence type="ECO:0000255" key="2">
    <source>
        <dbReference type="PROSITE-ProRule" id="PRU00394"/>
    </source>
</evidence>
<evidence type="ECO:0000269" key="3">
    <source>
    </source>
</evidence>
<evidence type="ECO:0000269" key="4">
    <source>
    </source>
</evidence>
<evidence type="ECO:0000303" key="5">
    <source>
    </source>
</evidence>
<evidence type="ECO:0000305" key="6"/>
<evidence type="ECO:0007744" key="7">
    <source>
        <dbReference type="PDB" id="1YSP"/>
    </source>
</evidence>
<evidence type="ECO:0007829" key="8">
    <source>
        <dbReference type="PDB" id="1YSP"/>
    </source>
</evidence>
<reference key="1">
    <citation type="journal article" date="1996" name="DNA Res.">
        <title>A 460-kb DNA sequence of the Escherichia coli K-12 genome corresponding to the 40.1-50.0 min region on the linkage map.</title>
        <authorList>
            <person name="Itoh T."/>
            <person name="Aiba H."/>
            <person name="Baba T."/>
            <person name="Fujita K."/>
            <person name="Hayashi K."/>
            <person name="Inada T."/>
            <person name="Isono K."/>
            <person name="Kasai H."/>
            <person name="Kimura S."/>
            <person name="Kitakawa M."/>
            <person name="Kitagawa M."/>
            <person name="Makino K."/>
            <person name="Miki T."/>
            <person name="Mizobuchi K."/>
            <person name="Mori H."/>
            <person name="Mori T."/>
            <person name="Motomura K."/>
            <person name="Nakade S."/>
            <person name="Nakamura Y."/>
            <person name="Nashimoto H."/>
            <person name="Nishio Y."/>
            <person name="Oshima T."/>
            <person name="Saito N."/>
            <person name="Sampei G."/>
            <person name="Seki Y."/>
            <person name="Sivasundaram S."/>
            <person name="Tagami H."/>
            <person name="Takeda J."/>
            <person name="Takemoto K."/>
            <person name="Wada C."/>
            <person name="Yamamoto Y."/>
            <person name="Horiuchi T."/>
        </authorList>
    </citation>
    <scope>NUCLEOTIDE SEQUENCE [LARGE SCALE GENOMIC DNA]</scope>
    <source>
        <strain>K12 / W3110 / ATCC 27325 / DSM 5911</strain>
    </source>
</reference>
<reference key="2">
    <citation type="journal article" date="1997" name="Science">
        <title>The complete genome sequence of Escherichia coli K-12.</title>
        <authorList>
            <person name="Blattner F.R."/>
            <person name="Plunkett G. III"/>
            <person name="Bloch C.A."/>
            <person name="Perna N.T."/>
            <person name="Burland V."/>
            <person name="Riley M."/>
            <person name="Collado-Vides J."/>
            <person name="Glasner J.D."/>
            <person name="Rode C.K."/>
            <person name="Mayhew G.F."/>
            <person name="Gregor J."/>
            <person name="Davis N.W."/>
            <person name="Kirkpatrick H.A."/>
            <person name="Goeden M.A."/>
            <person name="Rose D.J."/>
            <person name="Mau B."/>
            <person name="Shao Y."/>
        </authorList>
    </citation>
    <scope>NUCLEOTIDE SEQUENCE [LARGE SCALE GENOMIC DNA]</scope>
    <source>
        <strain>K12 / MG1655 / ATCC 47076</strain>
    </source>
</reference>
<reference key="3">
    <citation type="journal article" date="2006" name="Mol. Syst. Biol.">
        <title>Highly accurate genome sequences of Escherichia coli K-12 strains MG1655 and W3110.</title>
        <authorList>
            <person name="Hayashi K."/>
            <person name="Morooka N."/>
            <person name="Yamamoto Y."/>
            <person name="Fujita K."/>
            <person name="Isono K."/>
            <person name="Choi S."/>
            <person name="Ohtsubo E."/>
            <person name="Baba T."/>
            <person name="Wanner B.L."/>
            <person name="Mori H."/>
            <person name="Horiuchi T."/>
        </authorList>
    </citation>
    <scope>NUCLEOTIDE SEQUENCE [LARGE SCALE GENOMIC DNA]</scope>
    <source>
        <strain>K12 / W3110 / ATCC 27325 / DSM 5911</strain>
    </source>
</reference>
<reference key="4">
    <citation type="journal article" date="1974" name="J. Bacteriol.">
        <title>Genetic control of the 2-keto-3-deoxy-d-gluconate metabolism in Escherichia coli K-12: kdg regulon.</title>
        <authorList>
            <person name="Pouyssegur J."/>
            <person name="Stoeber F."/>
        </authorList>
    </citation>
    <scope>FUNCTION AS A REPRESSOR</scope>
    <source>
        <strain>K12</strain>
    </source>
</reference>
<reference key="5">
    <citation type="journal article" date="2005" name="J. Bacteriol.">
        <title>Multiple regulators control expression of the Entner-Doudoroff aldolase (Eda) of Escherichia coli.</title>
        <authorList>
            <person name="Murray E.L."/>
            <person name="Conway T."/>
        </authorList>
    </citation>
    <scope>FUNCTION</scope>
    <scope>DNA-BINDING</scope>
</reference>
<reference evidence="7" key="6">
    <citation type="submission" date="2005-03" db="PDB data bank">
        <title>Structural study of effector binding specificity in iclR transcriptional regulators.</title>
        <authorList>
            <consortium name="Midwest center for structural genomics (MCSG)"/>
        </authorList>
    </citation>
    <scope>X-RAY CRYSTALLOGRAPHY (1.8 ANGSTROMS) OF 88-263</scope>
</reference>
<comment type="function">
    <text evidence="3 4">Transcriptional repressor that negatively regulates the expression of kdgT, kdgK and kdgA, which encode proteins involved in transport and catabolism of 2-keto-3-deoxygluconate (KDG) (PubMed:4359651). Also represses expression of eda, which encodes the Entner-Doudoroff aldolase, by binding to its P2 promoter region (PubMed:15659677).</text>
</comment>
<comment type="interaction">
    <interactant intactId="EBI-1123676">
        <id>P76268</id>
    </interactant>
    <interactant intactId="EBI-9126792">
        <id>P64503</id>
        <label>yebV</label>
    </interactant>
    <organismsDiffer>false</organismsDiffer>
    <experiments>3</experiments>
</comment>
<comment type="subcellular location">
    <subcellularLocation>
        <location evidence="6">Cytoplasm</location>
    </subcellularLocation>
</comment>
<protein>
    <recommendedName>
        <fullName evidence="6">HTH-type transcriptional regulator KdgR</fullName>
    </recommendedName>
</protein>
<proteinExistence type="evidence at protein level"/>
<sequence length="263" mass="30029">MANADLDKQPDSVSSVLKVFGILQALGEEREIGITELSQRVMMSKSTVYRFLQTMKTLGYVAQEGESEKYSLTLKLFELGARALQNVDLIRSADIQMRELSRLTKETIHLGALDEDSIVYIHKIDSMYNLRMYSRIGRRNPLYSTAIGKVLLAWRDRDEVKQILEGVEYKRSTERTITSTEALLPVLDQVREQGYGEDNEEQEEGLRCIAVPVFDRFGVVIAGLSISFPTLRFSEERLQEYVAMLHTAARKISAQMGYHDYPF</sequence>
<feature type="chain" id="PRO_0000201760" description="HTH-type transcriptional regulator KdgR">
    <location>
        <begin position="1"/>
        <end position="263"/>
    </location>
</feature>
<feature type="domain" description="HTH iclR-type" evidence="1">
    <location>
        <begin position="13"/>
        <end position="74"/>
    </location>
</feature>
<feature type="domain" description="IclR-ED" evidence="2">
    <location>
        <begin position="89"/>
        <end position="258"/>
    </location>
</feature>
<feature type="DNA-binding region" description="H-T-H motif" evidence="1">
    <location>
        <begin position="34"/>
        <end position="53"/>
    </location>
</feature>
<feature type="helix" evidence="8">
    <location>
        <begin position="88"/>
        <end position="104"/>
    </location>
</feature>
<feature type="strand" evidence="8">
    <location>
        <begin position="108"/>
        <end position="114"/>
    </location>
</feature>
<feature type="strand" evidence="8">
    <location>
        <begin position="117"/>
        <end position="124"/>
    </location>
</feature>
<feature type="strand" evidence="8">
    <location>
        <begin position="139"/>
        <end position="145"/>
    </location>
</feature>
<feature type="helix" evidence="8">
    <location>
        <begin position="146"/>
        <end position="153"/>
    </location>
</feature>
<feature type="helix" evidence="8">
    <location>
        <begin position="157"/>
        <end position="164"/>
    </location>
</feature>
<feature type="helix" evidence="8">
    <location>
        <begin position="180"/>
        <end position="193"/>
    </location>
</feature>
<feature type="strand" evidence="8">
    <location>
        <begin position="196"/>
        <end position="203"/>
    </location>
</feature>
<feature type="strand" evidence="8">
    <location>
        <begin position="206"/>
        <end position="214"/>
    </location>
</feature>
<feature type="strand" evidence="8">
    <location>
        <begin position="220"/>
        <end position="226"/>
    </location>
</feature>
<feature type="strand" evidence="8">
    <location>
        <begin position="229"/>
        <end position="232"/>
    </location>
</feature>
<feature type="helix" evidence="8">
    <location>
        <begin position="235"/>
        <end position="255"/>
    </location>
</feature>
<name>KDGR_ECOLI</name>